<sequence>MSFVTEIKTFAALGSGVIGSGWIARALAHGLDVVAWDPAPGAEAALRARVANAWPALRKQGLAPGAAQERLRFVASIEECVGDADFIQESAPERLDLKLDLHARISAAARPDVLIGSSTSGLLPSEFYAEASHPERCLVGHPFNPVYLLPLVEVVGGERTAAEAVRAAMRVYESLGMRPLHVRKEVPGFIADRLLEALWREALHLVNDGVATTGEIDDAIRFGAGLRWSFMGTFLTYTLAGGNAGMRHFMAQFGPALQLPWTYLPAPELTEALIDRVVEGTAEQQGARSIAELERYRDDCLLAVLGAIRETKARHGFAFAE</sequence>
<comment type="function">
    <text evidence="2 3 4">Catalyzes the NAD(+)-dependent oxidation of L-carnitine to 3-dehydrocarnitine (PubMed:24240508, PubMed:4302217). Is specific for L-carnitine and NAD(+) as substrates (PubMed:4302217). D,L-3-hydroxybutyrate, L-lactate, ethanol, L-malate and D,L-isocitrate are not substrates (PubMed:4302217). Is involved in a L-carnitine degradation pathway that allows P.aeruginosa to grow on L-carnitine as the sole source of carbon and nitrogen (PubMed:19406895).</text>
</comment>
<comment type="catalytic activity">
    <reaction evidence="3 4">
        <text>carnitine + NAD(+) = 3-dehydrocarnitine + NADH + H(+)</text>
        <dbReference type="Rhea" id="RHEA:19265"/>
        <dbReference type="ChEBI" id="CHEBI:15378"/>
        <dbReference type="ChEBI" id="CHEBI:17126"/>
        <dbReference type="ChEBI" id="CHEBI:57540"/>
        <dbReference type="ChEBI" id="CHEBI:57885"/>
        <dbReference type="ChEBI" id="CHEBI:57945"/>
        <dbReference type="EC" id="1.1.1.108"/>
    </reaction>
    <physiologicalReaction direction="left-to-right" evidence="3 4">
        <dbReference type="Rhea" id="RHEA:19266"/>
    </physiologicalReaction>
</comment>
<comment type="activity regulation">
    <text evidence="4">Analogs of L-carnitine such as D-carnitine, glycine betaine and choline, are competitive inhibitors of L-carnitine oxidation.</text>
</comment>
<comment type="biophysicochemical properties">
    <kinetics>
        <KM evidence="4">26 mM for L-carnitine (at pH 9.5)</KM>
        <KM evidence="4">8.9 mM for L-carnitine (at pH 9.0)</KM>
        <KM evidence="4">0.16 mM for NAD(+) (at pH 9.0)</KM>
        <KM evidence="4">1.3 mM for 3-dehydrocarnitine (at pH 7.2)</KM>
        <KM evidence="4">0.022 mM for NADH (at pH 7.2)</KM>
    </kinetics>
    <phDependence>
        <text evidence="4">Optimum pH is 9-9.5 for the forward reaction (oxidation) and 7.0 for the reverse reaction (reduction).</text>
    </phDependence>
    <temperatureDependence>
        <text evidence="4">Optimum temperature is 35 degrees Celsius for the reaction in both directions.</text>
    </temperatureDependence>
</comment>
<comment type="pathway">
    <text evidence="8">Amine and polyamine metabolism; carnitine metabolism.</text>
</comment>
<comment type="subunit">
    <text evidence="1">Homodimer.</text>
</comment>
<comment type="subcellular location">
    <subcellularLocation>
        <location evidence="1">Cytoplasm</location>
    </subcellularLocation>
</comment>
<comment type="induction">
    <text evidence="2">Highly induced by carnitine via the CdhR transcriptional regulator (PubMed:19406895). Not induced by glycine betaine or pyruvate (PubMed:19406895).</text>
</comment>
<comment type="disruption phenotype">
    <text evidence="2">Cells are incapable of growth on carnitine.</text>
</comment>
<comment type="similarity">
    <text evidence="1 7">Belongs to the 3-hydroxyacyl-CoA dehydrogenase family. L-carnitine dehydrogenase subfamily.</text>
</comment>
<gene>
    <name evidence="5" type="primary">cdhA</name>
    <name evidence="9" type="ordered locus">PA5386</name>
</gene>
<protein>
    <recommendedName>
        <fullName evidence="6">L-carnitine dehydrogenase</fullName>
        <shortName evidence="5">CDH</shortName>
        <shortName evidence="7">L-CDH</shortName>
        <ecNumber evidence="3 4">1.1.1.108</ecNumber>
    </recommendedName>
</protein>
<accession>Q9HTH8</accession>
<keyword id="KW-0963">Cytoplasm</keyword>
<keyword id="KW-0520">NAD</keyword>
<keyword id="KW-0560">Oxidoreductase</keyword>
<keyword id="KW-1185">Reference proteome</keyword>
<dbReference type="EC" id="1.1.1.108" evidence="3 4"/>
<dbReference type="EMBL" id="AE004091">
    <property type="protein sequence ID" value="AAG08771.1"/>
    <property type="molecule type" value="Genomic_DNA"/>
</dbReference>
<dbReference type="PIR" id="F82972">
    <property type="entry name" value="F82972"/>
</dbReference>
<dbReference type="RefSeq" id="NP_254073.1">
    <property type="nucleotide sequence ID" value="NC_002516.2"/>
</dbReference>
<dbReference type="RefSeq" id="WP_003096713.1">
    <property type="nucleotide sequence ID" value="NZ_QZGE01000031.1"/>
</dbReference>
<dbReference type="SMR" id="Q9HTH8"/>
<dbReference type="STRING" id="208964.PA5386"/>
<dbReference type="PaxDb" id="208964-PA5386"/>
<dbReference type="GeneID" id="881645"/>
<dbReference type="KEGG" id="pae:PA5386"/>
<dbReference type="PATRIC" id="fig|208964.12.peg.5646"/>
<dbReference type="PseudoCAP" id="PA5386"/>
<dbReference type="HOGENOM" id="CLU_009834_0_1_6"/>
<dbReference type="InParanoid" id="Q9HTH8"/>
<dbReference type="OrthoDB" id="9803287at2"/>
<dbReference type="PhylomeDB" id="Q9HTH8"/>
<dbReference type="BioCyc" id="MetaCyc:G1FZ6-5513-MONOMER"/>
<dbReference type="BioCyc" id="PAER208964:G1FZ6-5513-MONOMER"/>
<dbReference type="BRENDA" id="1.1.1.108">
    <property type="organism ID" value="5087"/>
</dbReference>
<dbReference type="UniPathway" id="UPA00117"/>
<dbReference type="Proteomes" id="UP000002438">
    <property type="component" value="Chromosome"/>
</dbReference>
<dbReference type="GO" id="GO:0005737">
    <property type="term" value="C:cytoplasm"/>
    <property type="evidence" value="ECO:0007669"/>
    <property type="project" value="UniProtKB-SubCell"/>
</dbReference>
<dbReference type="GO" id="GO:0047728">
    <property type="term" value="F:carnitine 3-dehydrogenase activity"/>
    <property type="evidence" value="ECO:0007669"/>
    <property type="project" value="UniProtKB-UniRule"/>
</dbReference>
<dbReference type="GO" id="GO:0070403">
    <property type="term" value="F:NAD+ binding"/>
    <property type="evidence" value="ECO:0007669"/>
    <property type="project" value="InterPro"/>
</dbReference>
<dbReference type="GO" id="GO:0016491">
    <property type="term" value="F:oxidoreductase activity"/>
    <property type="evidence" value="ECO:0000318"/>
    <property type="project" value="GO_Central"/>
</dbReference>
<dbReference type="GO" id="GO:0042413">
    <property type="term" value="P:carnitine catabolic process"/>
    <property type="evidence" value="ECO:0000315"/>
    <property type="project" value="PseudoCAP"/>
</dbReference>
<dbReference type="GO" id="GO:0006631">
    <property type="term" value="P:fatty acid metabolic process"/>
    <property type="evidence" value="ECO:0007669"/>
    <property type="project" value="InterPro"/>
</dbReference>
<dbReference type="FunFam" id="1.10.1040.10:FF:000027">
    <property type="entry name" value="L-carnitine dehydrogenase"/>
    <property type="match status" value="1"/>
</dbReference>
<dbReference type="FunFam" id="3.40.50.720:FF:000522">
    <property type="entry name" value="L-carnitine dehydrogenase"/>
    <property type="match status" value="1"/>
</dbReference>
<dbReference type="Gene3D" id="1.10.1040.10">
    <property type="entry name" value="N-(1-d-carboxylethyl)-l-norvaline Dehydrogenase, domain 2"/>
    <property type="match status" value="1"/>
</dbReference>
<dbReference type="Gene3D" id="3.40.50.720">
    <property type="entry name" value="NAD(P)-binding Rossmann-like Domain"/>
    <property type="match status" value="1"/>
</dbReference>
<dbReference type="HAMAP" id="MF_02129">
    <property type="entry name" value="L_carnitine_dehydrog"/>
    <property type="match status" value="1"/>
</dbReference>
<dbReference type="InterPro" id="IPR022694">
    <property type="entry name" value="3-OHacyl-CoA_DH"/>
</dbReference>
<dbReference type="InterPro" id="IPR006176">
    <property type="entry name" value="3-OHacyl-CoA_DH_NAD-bd"/>
</dbReference>
<dbReference type="InterPro" id="IPR006108">
    <property type="entry name" value="3HC_DH_C"/>
</dbReference>
<dbReference type="InterPro" id="IPR008927">
    <property type="entry name" value="6-PGluconate_DH-like_C_sf"/>
</dbReference>
<dbReference type="InterPro" id="IPR013328">
    <property type="entry name" value="6PGD_dom2"/>
</dbReference>
<dbReference type="InterPro" id="IPR026578">
    <property type="entry name" value="L-carnitine_dehydrogenase"/>
</dbReference>
<dbReference type="InterPro" id="IPR036291">
    <property type="entry name" value="NAD(P)-bd_dom_sf"/>
</dbReference>
<dbReference type="NCBIfam" id="NF005471">
    <property type="entry name" value="PRK07066.1"/>
    <property type="match status" value="1"/>
</dbReference>
<dbReference type="PANTHER" id="PTHR48075">
    <property type="entry name" value="3-HYDROXYACYL-COA DEHYDROGENASE FAMILY PROTEIN"/>
    <property type="match status" value="1"/>
</dbReference>
<dbReference type="PANTHER" id="PTHR48075:SF5">
    <property type="entry name" value="3-HYDROXYBUTYRYL-COA DEHYDROGENASE"/>
    <property type="match status" value="1"/>
</dbReference>
<dbReference type="Pfam" id="PF00725">
    <property type="entry name" value="3HCDH"/>
    <property type="match status" value="1"/>
</dbReference>
<dbReference type="Pfam" id="PF02737">
    <property type="entry name" value="3HCDH_N"/>
    <property type="match status" value="1"/>
</dbReference>
<dbReference type="PIRSF" id="PIRSF000105">
    <property type="entry name" value="HCDH"/>
    <property type="match status" value="1"/>
</dbReference>
<dbReference type="SUPFAM" id="SSF48179">
    <property type="entry name" value="6-phosphogluconate dehydrogenase C-terminal domain-like"/>
    <property type="match status" value="1"/>
</dbReference>
<dbReference type="SUPFAM" id="SSF51735">
    <property type="entry name" value="NAD(P)-binding Rossmann-fold domains"/>
    <property type="match status" value="1"/>
</dbReference>
<reference key="1">
    <citation type="journal article" date="2000" name="Nature">
        <title>Complete genome sequence of Pseudomonas aeruginosa PAO1, an opportunistic pathogen.</title>
        <authorList>
            <person name="Stover C.K."/>
            <person name="Pham X.-Q.T."/>
            <person name="Erwin A.L."/>
            <person name="Mizoguchi S.D."/>
            <person name="Warrener P."/>
            <person name="Hickey M.J."/>
            <person name="Brinkman F.S.L."/>
            <person name="Hufnagle W.O."/>
            <person name="Kowalik D.J."/>
            <person name="Lagrou M."/>
            <person name="Garber R.L."/>
            <person name="Goltry L."/>
            <person name="Tolentino E."/>
            <person name="Westbrock-Wadman S."/>
            <person name="Yuan Y."/>
            <person name="Brody L.L."/>
            <person name="Coulter S.N."/>
            <person name="Folger K.R."/>
            <person name="Kas A."/>
            <person name="Larbig K."/>
            <person name="Lim R.M."/>
            <person name="Smith K.A."/>
            <person name="Spencer D.H."/>
            <person name="Wong G.K.-S."/>
            <person name="Wu Z."/>
            <person name="Paulsen I.T."/>
            <person name="Reizer J."/>
            <person name="Saier M.H. Jr."/>
            <person name="Hancock R.E.W."/>
            <person name="Lory S."/>
            <person name="Olson M.V."/>
        </authorList>
    </citation>
    <scope>NUCLEOTIDE SEQUENCE [LARGE SCALE GENOMIC DNA]</scope>
    <source>
        <strain>ATCC 15692 / DSM 22644 / CIP 104116 / JCM 14847 / LMG 12228 / 1C / PRS 101 / PAO1</strain>
    </source>
</reference>
<reference key="2">
    <citation type="journal article" date="1968" name="Eur. J. Biochem.">
        <title>Purification and properties of carnitine dehydrogenase from Pseudomonas aeruginosa.</title>
        <authorList>
            <person name="Aurich H."/>
            <person name="Kleber H.P."/>
            <person name="Sorger H."/>
            <person name="Tauchert H."/>
        </authorList>
    </citation>
    <scope>FUNCTION</scope>
    <scope>CATALYTIC ACTIVITY</scope>
    <scope>SUBSTRATE SPECIFICITY</scope>
    <scope>BIOPHYSICOCHEMICAL PROPERTIES</scope>
    <scope>ACTIVITY REGULATION</scope>
    <source>
        <strain>NCTC A7244</strain>
    </source>
</reference>
<reference key="3">
    <citation type="journal article" date="2009" name="Microbiology">
        <title>Identification of genes required for Pseudomonas aeruginosa carnitine catabolism.</title>
        <authorList>
            <person name="Wargo M.J."/>
            <person name="Hogan D.A."/>
        </authorList>
    </citation>
    <scope>FUNCTION IN CARNITINE CATABOLISM</scope>
    <scope>INDUCTION</scope>
    <scope>DISRUPTION PHENOTYPE</scope>
    <source>
        <strain>ATCC 15692 / DSM 22644 / CIP 104116 / JCM 14847 / LMG 12228 / 1C / PRS 101 / PAO1</strain>
    </source>
</reference>
<reference key="4">
    <citation type="journal article" date="2014" name="Nat. Chem. Biol.">
        <title>Revealing the hidden functional diversity of an enzyme family.</title>
        <authorList>
            <person name="Bastard K."/>
            <person name="Smith A.A."/>
            <person name="Vergne-Vaxelaire C."/>
            <person name="Perret A."/>
            <person name="Zaparucha A."/>
            <person name="De Melo-Minardi R."/>
            <person name="Mariage A."/>
            <person name="Boutard M."/>
            <person name="Debard A."/>
            <person name="Lechaplais C."/>
            <person name="Pelle C."/>
            <person name="Pellouin V."/>
            <person name="Perchat N."/>
            <person name="Petit J.L."/>
            <person name="Kreimeyer A."/>
            <person name="Medigue C."/>
            <person name="Weissenbach J."/>
            <person name="Artiguenave F."/>
            <person name="De Berardinis V."/>
            <person name="Vallenet D."/>
            <person name="Salanoubat M."/>
        </authorList>
    </citation>
    <scope>FUNCTION</scope>
    <scope>CATALYTIC ACTIVITY</scope>
</reference>
<organism>
    <name type="scientific">Pseudomonas aeruginosa (strain ATCC 15692 / DSM 22644 / CIP 104116 / JCM 14847 / LMG 12228 / 1C / PRS 101 / PAO1)</name>
    <dbReference type="NCBI Taxonomy" id="208964"/>
    <lineage>
        <taxon>Bacteria</taxon>
        <taxon>Pseudomonadati</taxon>
        <taxon>Pseudomonadota</taxon>
        <taxon>Gammaproteobacteria</taxon>
        <taxon>Pseudomonadales</taxon>
        <taxon>Pseudomonadaceae</taxon>
        <taxon>Pseudomonas</taxon>
    </lineage>
</organism>
<name>LCDH_PSEAE</name>
<evidence type="ECO:0000255" key="1">
    <source>
        <dbReference type="HAMAP-Rule" id="MF_02129"/>
    </source>
</evidence>
<evidence type="ECO:0000269" key="2">
    <source>
    </source>
</evidence>
<evidence type="ECO:0000269" key="3">
    <source>
    </source>
</evidence>
<evidence type="ECO:0000269" key="4">
    <source>
    </source>
</evidence>
<evidence type="ECO:0000303" key="5">
    <source>
    </source>
</evidence>
<evidence type="ECO:0000303" key="6">
    <source>
    </source>
</evidence>
<evidence type="ECO:0000305" key="7"/>
<evidence type="ECO:0000305" key="8">
    <source>
    </source>
</evidence>
<evidence type="ECO:0000312" key="9">
    <source>
        <dbReference type="EMBL" id="AAG08771.1"/>
    </source>
</evidence>
<proteinExistence type="evidence at protein level"/>
<feature type="chain" id="PRO_0000417901" description="L-carnitine dehydrogenase">
    <location>
        <begin position="1"/>
        <end position="321"/>
    </location>
</feature>
<feature type="binding site" evidence="1">
    <location>
        <begin position="14"/>
        <end position="19"/>
    </location>
    <ligand>
        <name>NAD(+)</name>
        <dbReference type="ChEBI" id="CHEBI:57540"/>
    </ligand>
</feature>